<feature type="chain" id="PRO_0000105987" description="Nucleoprotein">
    <location>
        <begin position="1"/>
        <end position="409"/>
    </location>
</feature>
<feature type="domain" description="CoV N NTD" evidence="2">
    <location>
        <begin position="32"/>
        <end position="157"/>
    </location>
</feature>
<feature type="domain" description="CoV N CTD" evidence="3">
    <location>
        <begin position="217"/>
        <end position="333"/>
    </location>
</feature>
<feature type="region of interest" description="Disordered" evidence="4">
    <location>
        <begin position="1"/>
        <end position="64"/>
    </location>
</feature>
<feature type="region of interest" description="RNA-binding" evidence="1">
    <location>
        <begin position="30"/>
        <end position="161"/>
    </location>
</feature>
<feature type="region of interest" description="Disordered" evidence="4">
    <location>
        <begin position="167"/>
        <end position="197"/>
    </location>
</feature>
<feature type="region of interest" description="Dimerization" evidence="1">
    <location>
        <begin position="228"/>
        <end position="335"/>
    </location>
</feature>
<feature type="region of interest" description="Disordered" evidence="4">
    <location>
        <begin position="327"/>
        <end position="409"/>
    </location>
</feature>
<feature type="compositionally biased region" description="Basic and acidic residues" evidence="4">
    <location>
        <begin position="176"/>
        <end position="197"/>
    </location>
</feature>
<feature type="compositionally biased region" description="Basic and acidic residues" evidence="4">
    <location>
        <begin position="332"/>
        <end position="349"/>
    </location>
</feature>
<feature type="modified residue" description="Phosphoserine; by host" evidence="1">
    <location>
        <position position="192"/>
    </location>
</feature>
<feature type="modified residue" description="Phosphothreonine; by host" evidence="1">
    <location>
        <position position="374"/>
    </location>
</feature>
<feature type="disulfide bond" evidence="1">
    <location>
        <begin position="322"/>
        <end position="325"/>
    </location>
</feature>
<accession>Q96605</accession>
<organismHost>
    <name type="scientific">Gallus gallus</name>
    <name type="common">Chicken</name>
    <dbReference type="NCBI Taxonomy" id="9031"/>
</organismHost>
<evidence type="ECO:0000255" key="1">
    <source>
        <dbReference type="HAMAP-Rule" id="MF_04097"/>
    </source>
</evidence>
<evidence type="ECO:0000255" key="2">
    <source>
        <dbReference type="PROSITE-ProRule" id="PRU01276"/>
    </source>
</evidence>
<evidence type="ECO:0000255" key="3">
    <source>
        <dbReference type="PROSITE-ProRule" id="PRU01277"/>
    </source>
</evidence>
<evidence type="ECO:0000256" key="4">
    <source>
        <dbReference type="SAM" id="MobiDB-lite"/>
    </source>
</evidence>
<organism>
    <name type="scientific">Avian infectious bronchitis virus (strain V18/91)</name>
    <name type="common">IBV</name>
    <dbReference type="NCBI Taxonomy" id="231427"/>
    <lineage>
        <taxon>Viruses</taxon>
        <taxon>Riboviria</taxon>
        <taxon>Orthornavirae</taxon>
        <taxon>Pisuviricota</taxon>
        <taxon>Pisoniviricetes</taxon>
        <taxon>Nidovirales</taxon>
        <taxon>Cornidovirineae</taxon>
        <taxon>Coronaviridae</taxon>
        <taxon>Orthocoronavirinae</taxon>
        <taxon>Gammacoronavirus</taxon>
        <taxon>Igacovirus</taxon>
        <taxon>Avian coronavirus</taxon>
    </lineage>
</organism>
<sequence>MSAGKLKFDSPAPILKLSKNTGSTPPKVGGTGQASWFQSLKEKKRTGTPPTFEGSGVPDNSNVKPQFQHGYWKRQHRYKPGKGGRKPVADAWYFYYTGTGPFGDLKWGDSNDDVVWVKAKGADTSKIGNYGVRDPDKFDQAPLRFTEGGPDNNYRWDFIALNRGRSRNSSAVTSRENSRPGSRDSSRGRQRSRVDDDLIDRAAKIIMQQQKNGSRISKQKANEMAERKYHKRAIAPGKRIDEVFGQRRKGQAPNFGDDKMIEEGVKDGRLTAMLNLVPTPHACLLGSMVTAKLQPDGLHVRFSFETVVKREDPQFANYSKICDECVDGVGTRPKDDPTPRSRAASKDRNSAPATPKQQRAKKVHKKKEEESSLTEEEEEVNKQLEYDDDVTDIPNKIDWGEGAFDDINI</sequence>
<keyword id="KW-0013">ADP-ribosylation</keyword>
<keyword id="KW-1015">Disulfide bond</keyword>
<keyword id="KW-1040">Host Golgi apparatus</keyword>
<keyword id="KW-0597">Phosphoprotein</keyword>
<keyword id="KW-0687">Ribonucleoprotein</keyword>
<keyword id="KW-0694">RNA-binding</keyword>
<keyword id="KW-0804">Transcription</keyword>
<keyword id="KW-0805">Transcription regulation</keyword>
<keyword id="KW-0543">Viral nucleoprotein</keyword>
<keyword id="KW-0946">Virion</keyword>
<name>NCAP_IBVV1</name>
<protein>
    <recommendedName>
        <fullName evidence="1">Nucleoprotein</fullName>
    </recommendedName>
    <alternativeName>
        <fullName evidence="1">Nucleocapsid protein</fullName>
        <shortName evidence="1">NC</shortName>
        <shortName evidence="1">Protein N</shortName>
    </alternativeName>
</protein>
<dbReference type="EMBL" id="U52601">
    <property type="protein sequence ID" value="AAB48162.1"/>
    <property type="molecule type" value="mRNA"/>
</dbReference>
<dbReference type="SMR" id="Q96605"/>
<dbReference type="GO" id="GO:0044172">
    <property type="term" value="C:host cell endoplasmic reticulum-Golgi intermediate compartment"/>
    <property type="evidence" value="ECO:0007669"/>
    <property type="project" value="UniProtKB-SubCell"/>
</dbReference>
<dbReference type="GO" id="GO:0044177">
    <property type="term" value="C:host cell Golgi apparatus"/>
    <property type="evidence" value="ECO:0007669"/>
    <property type="project" value="UniProtKB-SubCell"/>
</dbReference>
<dbReference type="GO" id="GO:1990904">
    <property type="term" value="C:ribonucleoprotein complex"/>
    <property type="evidence" value="ECO:0007669"/>
    <property type="project" value="UniProtKB-KW"/>
</dbReference>
<dbReference type="GO" id="GO:0019013">
    <property type="term" value="C:viral nucleocapsid"/>
    <property type="evidence" value="ECO:0007669"/>
    <property type="project" value="UniProtKB-UniRule"/>
</dbReference>
<dbReference type="GO" id="GO:0003723">
    <property type="term" value="F:RNA binding"/>
    <property type="evidence" value="ECO:0007669"/>
    <property type="project" value="UniProtKB-UniRule"/>
</dbReference>
<dbReference type="CDD" id="cd21595">
    <property type="entry name" value="CoV_N-CTD"/>
    <property type="match status" value="1"/>
</dbReference>
<dbReference type="CDD" id="cd21554">
    <property type="entry name" value="CoV_N-NTD"/>
    <property type="match status" value="1"/>
</dbReference>
<dbReference type="HAMAP" id="MF_04097">
    <property type="entry name" value="GAMMA_CORONA_NCAP"/>
    <property type="match status" value="1"/>
</dbReference>
<dbReference type="InterPro" id="IPR044344">
    <property type="entry name" value="N_prot_C_CoV"/>
</dbReference>
<dbReference type="InterPro" id="IPR044345">
    <property type="entry name" value="N_prot_N_CoV"/>
</dbReference>
<dbReference type="InterPro" id="IPR042547">
    <property type="entry name" value="NCAP_gCoV"/>
</dbReference>
<dbReference type="InterPro" id="IPR001218">
    <property type="entry name" value="Nucleocap_CoV"/>
</dbReference>
<dbReference type="InterPro" id="IPR037179">
    <property type="entry name" value="Nucleocapsid_C"/>
</dbReference>
<dbReference type="InterPro" id="IPR037195">
    <property type="entry name" value="Nucleocapsid_N"/>
</dbReference>
<dbReference type="Pfam" id="PF00937">
    <property type="entry name" value="CoV_nucleocap"/>
    <property type="match status" value="1"/>
</dbReference>
<dbReference type="PIRSF" id="PIRSF003888">
    <property type="entry name" value="Corona_nucleocap"/>
    <property type="match status" value="1"/>
</dbReference>
<dbReference type="SUPFAM" id="SSF110304">
    <property type="entry name" value="Coronavirus RNA-binding domain"/>
    <property type="match status" value="1"/>
</dbReference>
<dbReference type="SUPFAM" id="SSF103068">
    <property type="entry name" value="Nucleocapsid protein dimerization domain"/>
    <property type="match status" value="1"/>
</dbReference>
<dbReference type="PROSITE" id="PS51929">
    <property type="entry name" value="COV_N_CTD"/>
    <property type="match status" value="1"/>
</dbReference>
<dbReference type="PROSITE" id="PS51928">
    <property type="entry name" value="COV_N_NTD"/>
    <property type="match status" value="1"/>
</dbReference>
<gene>
    <name evidence="1" type="primary">N</name>
    <name type="ORF">6</name>
</gene>
<proteinExistence type="evidence at transcript level"/>
<reference key="1">
    <citation type="journal article" date="1996" name="Virology">
        <title>Novel variation in the N protein of avian infectious bronchitis virus.</title>
        <authorList>
            <person name="Sapats S.I."/>
            <person name="Ashton F."/>
            <person name="Wright P.J."/>
            <person name="Ignjatovic J."/>
        </authorList>
    </citation>
    <scope>NUCLEOTIDE SEQUENCE [MRNA]</scope>
</reference>
<reference key="2">
    <citation type="submission" date="1997-01" db="EMBL/GenBank/DDBJ databases">
        <authorList>
            <person name="Sapats S.I."/>
            <person name="Ashton F."/>
            <person name="Wright P.J."/>
            <person name="Ignjatovic J."/>
        </authorList>
    </citation>
    <scope>SEQUENCE REVISION</scope>
</reference>
<comment type="function">
    <text evidence="1">Packages the positive strand viral genome RNA into a helical ribonucleocapsid (RNP) and plays a fundamental role during virion assembly through its interactions with the viral genome and membrane protein M. Plays an important role in enhancing the efficiency of subgenomic viral RNA transcription as well as viral replication.</text>
</comment>
<comment type="subunit">
    <text evidence="1">Homooligomer. Both monomeric and oligomeric forms interact with RNA. Interacts with protein M. Interacts with NSP3; this interaction serves to tether the genome to the newly translated replicase-transcriptase complex at a very early stage of infection.</text>
</comment>
<comment type="subcellular location">
    <subcellularLocation>
        <location evidence="1">Virion</location>
    </subcellularLocation>
    <subcellularLocation>
        <location evidence="1">Host endoplasmic reticulum-Golgi intermediate compartment</location>
    </subcellularLocation>
    <subcellularLocation>
        <location evidence="1">Host Golgi apparatus</location>
    </subcellularLocation>
    <text evidence="1">Located inside the virion, complexed with the viral RNA. Probably associates with ER-derived membranes where it participates in viral RNA synthesis and virus budding.</text>
</comment>
<comment type="PTM">
    <text evidence="1">ADP-ribosylated. The ADP-ribosylation is retained in the virion during infection.</text>
</comment>
<comment type="PTM">
    <text evidence="1">Phosphorylated on serine and threonine residues.</text>
</comment>
<comment type="similarity">
    <text evidence="1">Belongs to the gammacoronavirus nucleocapsid protein family.</text>
</comment>